<comment type="function">
    <text evidence="1">NDH-1 shuttles electrons from NADH, via FMN and iron-sulfur (Fe-S) centers, to quinones in the respiratory chain. The immediate electron acceptor for the enzyme in this species is believed to be ubiquinone. Couples the redox reaction to proton translocation (for every two electrons transferred, four hydrogen ions are translocated across the cytoplasmic membrane), and thus conserves the redox energy in a proton gradient. This subunit may bind ubiquinone.</text>
</comment>
<comment type="catalytic activity">
    <reaction evidence="1">
        <text>a quinone + NADH + 5 H(+)(in) = a quinol + NAD(+) + 4 H(+)(out)</text>
        <dbReference type="Rhea" id="RHEA:57888"/>
        <dbReference type="ChEBI" id="CHEBI:15378"/>
        <dbReference type="ChEBI" id="CHEBI:24646"/>
        <dbReference type="ChEBI" id="CHEBI:57540"/>
        <dbReference type="ChEBI" id="CHEBI:57945"/>
        <dbReference type="ChEBI" id="CHEBI:132124"/>
    </reaction>
</comment>
<comment type="subunit">
    <text evidence="1">NDH-1 is composed of 14 different subunits. Subunits NuoA, H, J, K, L, M, N constitute the membrane sector of the complex.</text>
</comment>
<comment type="subcellular location">
    <subcellularLocation>
        <location evidence="1">Cell inner membrane</location>
        <topology evidence="1">Multi-pass membrane protein</topology>
    </subcellularLocation>
</comment>
<comment type="similarity">
    <text evidence="1">Belongs to the complex I subunit 1 family.</text>
</comment>
<evidence type="ECO:0000255" key="1">
    <source>
        <dbReference type="HAMAP-Rule" id="MF_01350"/>
    </source>
</evidence>
<protein>
    <recommendedName>
        <fullName evidence="1">NADH-quinone oxidoreductase subunit H</fullName>
        <ecNumber evidence="1">7.1.1.-</ecNumber>
    </recommendedName>
    <alternativeName>
        <fullName evidence="1">NADH dehydrogenase I subunit H</fullName>
    </alternativeName>
    <alternativeName>
        <fullName evidence="1">NDH-1 subunit H</fullName>
    </alternativeName>
</protein>
<keyword id="KW-0997">Cell inner membrane</keyword>
<keyword id="KW-1003">Cell membrane</keyword>
<keyword id="KW-0472">Membrane</keyword>
<keyword id="KW-0520">NAD</keyword>
<keyword id="KW-0874">Quinone</keyword>
<keyword id="KW-1185">Reference proteome</keyword>
<keyword id="KW-1278">Translocase</keyword>
<keyword id="KW-0812">Transmembrane</keyword>
<keyword id="KW-1133">Transmembrane helix</keyword>
<keyword id="KW-0830">Ubiquinone</keyword>
<organism>
    <name type="scientific">Azoarcus sp. (strain BH72)</name>
    <dbReference type="NCBI Taxonomy" id="418699"/>
    <lineage>
        <taxon>Bacteria</taxon>
        <taxon>Pseudomonadati</taxon>
        <taxon>Pseudomonadota</taxon>
        <taxon>Betaproteobacteria</taxon>
        <taxon>Rhodocyclales</taxon>
        <taxon>Zoogloeaceae</taxon>
        <taxon>Azoarcus</taxon>
    </lineage>
</organism>
<feature type="chain" id="PRO_0000298792" description="NADH-quinone oxidoreductase subunit H">
    <location>
        <begin position="1"/>
        <end position="349"/>
    </location>
</feature>
<feature type="transmembrane region" description="Helical" evidence="1">
    <location>
        <begin position="16"/>
        <end position="36"/>
    </location>
</feature>
<feature type="transmembrane region" description="Helical" evidence="1">
    <location>
        <begin position="88"/>
        <end position="108"/>
    </location>
</feature>
<feature type="transmembrane region" description="Helical" evidence="1">
    <location>
        <begin position="123"/>
        <end position="143"/>
    </location>
</feature>
<feature type="transmembrane region" description="Helical" evidence="1">
    <location>
        <begin position="157"/>
        <end position="177"/>
    </location>
</feature>
<feature type="transmembrane region" description="Helical" evidence="1">
    <location>
        <begin position="202"/>
        <end position="222"/>
    </location>
</feature>
<feature type="transmembrane region" description="Helical" evidence="1">
    <location>
        <begin position="264"/>
        <end position="284"/>
    </location>
</feature>
<feature type="transmembrane region" description="Helical" evidence="1">
    <location>
        <begin position="285"/>
        <end position="305"/>
    </location>
</feature>
<feature type="transmembrane region" description="Helical" evidence="1">
    <location>
        <begin position="325"/>
        <end position="345"/>
    </location>
</feature>
<reference key="1">
    <citation type="journal article" date="2006" name="Nat. Biotechnol.">
        <title>Complete genome of the mutualistic, N2-fixing grass endophyte Azoarcus sp. strain BH72.</title>
        <authorList>
            <person name="Krause A."/>
            <person name="Ramakumar A."/>
            <person name="Bartels D."/>
            <person name="Battistoni F."/>
            <person name="Bekel T."/>
            <person name="Boch J."/>
            <person name="Boehm M."/>
            <person name="Friedrich F."/>
            <person name="Hurek T."/>
            <person name="Krause L."/>
            <person name="Linke B."/>
            <person name="McHardy A.C."/>
            <person name="Sarkar A."/>
            <person name="Schneiker S."/>
            <person name="Syed A.A."/>
            <person name="Thauer R."/>
            <person name="Vorhoelter F.-J."/>
            <person name="Weidner S."/>
            <person name="Puehler A."/>
            <person name="Reinhold-Hurek B."/>
            <person name="Kaiser O."/>
            <person name="Goesmann A."/>
        </authorList>
    </citation>
    <scope>NUCLEOTIDE SEQUENCE [LARGE SCALE GENOMIC DNA]</scope>
    <source>
        <strain>BH72</strain>
    </source>
</reference>
<sequence length="349" mass="38239">MEGFLQPVADLFGPSWPVVWTLLKIVAIVAPLMGCVAYLTLAERKVIGYMQVRIGPNRVGPFGLLQPIADGVKLLLKEIIFPSSASKGLFIVGPILALAPSLVAWAVVPFDDGLVLANVNAGLLFLLAVTSMEVYGVIVAGWASNSKYPFIGAMRAAAQMVSYEVSMGFALICVLLISSSLNLSEIVNSQGSGRFHDMGLSFLSWNWLPLLPMFVVYLISGIAETNRAPFDVVEGEAEIVAGHMVEYSGMAFALFFLAEYANMILVSILTSVLFLGGWLSPVGFLPDGFHWLALKTASILFIFLWARATFPRFRYDHIMRLGWKVFIPVTLVWVVVVAVWLMSPLSIWK</sequence>
<proteinExistence type="inferred from homology"/>
<gene>
    <name evidence="1" type="primary">nuoH</name>
    <name type="ordered locus">azo1403</name>
</gene>
<name>NUOH_AZOSB</name>
<accession>A1K5B5</accession>
<dbReference type="EC" id="7.1.1.-" evidence="1"/>
<dbReference type="EMBL" id="AM406670">
    <property type="protein sequence ID" value="CAL94020.1"/>
    <property type="molecule type" value="Genomic_DNA"/>
</dbReference>
<dbReference type="RefSeq" id="WP_011765136.1">
    <property type="nucleotide sequence ID" value="NC_008702.1"/>
</dbReference>
<dbReference type="SMR" id="A1K5B5"/>
<dbReference type="STRING" id="62928.azo1403"/>
<dbReference type="KEGG" id="aoa:dqs_1527"/>
<dbReference type="KEGG" id="azo:azo1403"/>
<dbReference type="eggNOG" id="COG1005">
    <property type="taxonomic scope" value="Bacteria"/>
</dbReference>
<dbReference type="HOGENOM" id="CLU_015134_0_1_4"/>
<dbReference type="OrthoDB" id="9803734at2"/>
<dbReference type="Proteomes" id="UP000002588">
    <property type="component" value="Chromosome"/>
</dbReference>
<dbReference type="GO" id="GO:0005886">
    <property type="term" value="C:plasma membrane"/>
    <property type="evidence" value="ECO:0007669"/>
    <property type="project" value="UniProtKB-SubCell"/>
</dbReference>
<dbReference type="GO" id="GO:0003954">
    <property type="term" value="F:NADH dehydrogenase activity"/>
    <property type="evidence" value="ECO:0007669"/>
    <property type="project" value="TreeGrafter"/>
</dbReference>
<dbReference type="GO" id="GO:0016655">
    <property type="term" value="F:oxidoreductase activity, acting on NAD(P)H, quinone or similar compound as acceptor"/>
    <property type="evidence" value="ECO:0007669"/>
    <property type="project" value="UniProtKB-UniRule"/>
</dbReference>
<dbReference type="GO" id="GO:0048038">
    <property type="term" value="F:quinone binding"/>
    <property type="evidence" value="ECO:0007669"/>
    <property type="project" value="UniProtKB-KW"/>
</dbReference>
<dbReference type="GO" id="GO:0009060">
    <property type="term" value="P:aerobic respiration"/>
    <property type="evidence" value="ECO:0007669"/>
    <property type="project" value="TreeGrafter"/>
</dbReference>
<dbReference type="HAMAP" id="MF_01350">
    <property type="entry name" value="NDH1_NuoH"/>
    <property type="match status" value="1"/>
</dbReference>
<dbReference type="InterPro" id="IPR001694">
    <property type="entry name" value="NADH_UbQ_OxRdtase_su1/FPO"/>
</dbReference>
<dbReference type="InterPro" id="IPR018086">
    <property type="entry name" value="NADH_UbQ_OxRdtase_su1_CS"/>
</dbReference>
<dbReference type="NCBIfam" id="NF004741">
    <property type="entry name" value="PRK06076.1-2"/>
    <property type="match status" value="1"/>
</dbReference>
<dbReference type="NCBIfam" id="NF004742">
    <property type="entry name" value="PRK06076.1-3"/>
    <property type="match status" value="1"/>
</dbReference>
<dbReference type="PANTHER" id="PTHR11432">
    <property type="entry name" value="NADH DEHYDROGENASE SUBUNIT 1"/>
    <property type="match status" value="1"/>
</dbReference>
<dbReference type="PANTHER" id="PTHR11432:SF3">
    <property type="entry name" value="NADH-UBIQUINONE OXIDOREDUCTASE CHAIN 1"/>
    <property type="match status" value="1"/>
</dbReference>
<dbReference type="Pfam" id="PF00146">
    <property type="entry name" value="NADHdh"/>
    <property type="match status" value="1"/>
</dbReference>
<dbReference type="PROSITE" id="PS00667">
    <property type="entry name" value="COMPLEX1_ND1_1"/>
    <property type="match status" value="1"/>
</dbReference>
<dbReference type="PROSITE" id="PS00668">
    <property type="entry name" value="COMPLEX1_ND1_2"/>
    <property type="match status" value="1"/>
</dbReference>